<feature type="chain" id="PRO_1000142923" description="Large ribosomal subunit protein uL16">
    <location>
        <begin position="1"/>
        <end position="144"/>
    </location>
</feature>
<keyword id="KW-0687">Ribonucleoprotein</keyword>
<keyword id="KW-0689">Ribosomal protein</keyword>
<keyword id="KW-0694">RNA-binding</keyword>
<keyword id="KW-0699">rRNA-binding</keyword>
<keyword id="KW-0820">tRNA-binding</keyword>
<sequence length="144" mass="16172">MLMPKRVKYRREHRGKMRGRAKGGTEIAFGEFGLQAQAASWITNRQIEAARRAMTRYMKRGGKVWIKIFPSKPYTAKPLEVRMGSGKGAPEGWVAVVKPGKIMFEIAGVSEEVAREALRLAAHKLPVKCKFVKREENGGESNEN</sequence>
<comment type="function">
    <text evidence="1">Binds 23S rRNA and is also seen to make contacts with the A and possibly P site tRNAs.</text>
</comment>
<comment type="subunit">
    <text evidence="1">Part of the 50S ribosomal subunit.</text>
</comment>
<comment type="similarity">
    <text evidence="1">Belongs to the universal ribosomal protein uL16 family.</text>
</comment>
<dbReference type="EMBL" id="CP001186">
    <property type="protein sequence ID" value="ACK93813.1"/>
    <property type="molecule type" value="Genomic_DNA"/>
</dbReference>
<dbReference type="RefSeq" id="WP_000928969.1">
    <property type="nucleotide sequence ID" value="NC_011772.1"/>
</dbReference>
<dbReference type="SMR" id="B7IT26"/>
<dbReference type="GeneID" id="93010936"/>
<dbReference type="KEGG" id="bcg:BCG9842_B5188"/>
<dbReference type="HOGENOM" id="CLU_078858_2_1_9"/>
<dbReference type="Proteomes" id="UP000006744">
    <property type="component" value="Chromosome"/>
</dbReference>
<dbReference type="GO" id="GO:0022625">
    <property type="term" value="C:cytosolic large ribosomal subunit"/>
    <property type="evidence" value="ECO:0007669"/>
    <property type="project" value="TreeGrafter"/>
</dbReference>
<dbReference type="GO" id="GO:0019843">
    <property type="term" value="F:rRNA binding"/>
    <property type="evidence" value="ECO:0007669"/>
    <property type="project" value="UniProtKB-UniRule"/>
</dbReference>
<dbReference type="GO" id="GO:0003735">
    <property type="term" value="F:structural constituent of ribosome"/>
    <property type="evidence" value="ECO:0007669"/>
    <property type="project" value="InterPro"/>
</dbReference>
<dbReference type="GO" id="GO:0000049">
    <property type="term" value="F:tRNA binding"/>
    <property type="evidence" value="ECO:0007669"/>
    <property type="project" value="UniProtKB-KW"/>
</dbReference>
<dbReference type="GO" id="GO:0006412">
    <property type="term" value="P:translation"/>
    <property type="evidence" value="ECO:0007669"/>
    <property type="project" value="UniProtKB-UniRule"/>
</dbReference>
<dbReference type="CDD" id="cd01433">
    <property type="entry name" value="Ribosomal_L16_L10e"/>
    <property type="match status" value="1"/>
</dbReference>
<dbReference type="FunFam" id="3.90.1170.10:FF:000001">
    <property type="entry name" value="50S ribosomal protein L16"/>
    <property type="match status" value="1"/>
</dbReference>
<dbReference type="Gene3D" id="3.90.1170.10">
    <property type="entry name" value="Ribosomal protein L10e/L16"/>
    <property type="match status" value="1"/>
</dbReference>
<dbReference type="HAMAP" id="MF_01342">
    <property type="entry name" value="Ribosomal_uL16"/>
    <property type="match status" value="1"/>
</dbReference>
<dbReference type="InterPro" id="IPR047873">
    <property type="entry name" value="Ribosomal_uL16"/>
</dbReference>
<dbReference type="InterPro" id="IPR000114">
    <property type="entry name" value="Ribosomal_uL16_bact-type"/>
</dbReference>
<dbReference type="InterPro" id="IPR020798">
    <property type="entry name" value="Ribosomal_uL16_CS"/>
</dbReference>
<dbReference type="InterPro" id="IPR016180">
    <property type="entry name" value="Ribosomal_uL16_dom"/>
</dbReference>
<dbReference type="InterPro" id="IPR036920">
    <property type="entry name" value="Ribosomal_uL16_sf"/>
</dbReference>
<dbReference type="NCBIfam" id="TIGR01164">
    <property type="entry name" value="rplP_bact"/>
    <property type="match status" value="1"/>
</dbReference>
<dbReference type="PANTHER" id="PTHR12220">
    <property type="entry name" value="50S/60S RIBOSOMAL PROTEIN L16"/>
    <property type="match status" value="1"/>
</dbReference>
<dbReference type="PANTHER" id="PTHR12220:SF13">
    <property type="entry name" value="LARGE RIBOSOMAL SUBUNIT PROTEIN UL16M"/>
    <property type="match status" value="1"/>
</dbReference>
<dbReference type="Pfam" id="PF00252">
    <property type="entry name" value="Ribosomal_L16"/>
    <property type="match status" value="1"/>
</dbReference>
<dbReference type="PRINTS" id="PR00060">
    <property type="entry name" value="RIBOSOMALL16"/>
</dbReference>
<dbReference type="SUPFAM" id="SSF54686">
    <property type="entry name" value="Ribosomal protein L16p/L10e"/>
    <property type="match status" value="1"/>
</dbReference>
<dbReference type="PROSITE" id="PS00586">
    <property type="entry name" value="RIBOSOMAL_L16_1"/>
    <property type="match status" value="1"/>
</dbReference>
<dbReference type="PROSITE" id="PS00701">
    <property type="entry name" value="RIBOSOMAL_L16_2"/>
    <property type="match status" value="1"/>
</dbReference>
<reference key="1">
    <citation type="submission" date="2008-10" db="EMBL/GenBank/DDBJ databases">
        <title>Genome sequence of Bacillus cereus G9842.</title>
        <authorList>
            <person name="Dodson R.J."/>
            <person name="Durkin A.S."/>
            <person name="Rosovitz M.J."/>
            <person name="Rasko D.A."/>
            <person name="Hoffmaster A."/>
            <person name="Ravel J."/>
            <person name="Sutton G."/>
        </authorList>
    </citation>
    <scope>NUCLEOTIDE SEQUENCE [LARGE SCALE GENOMIC DNA]</scope>
    <source>
        <strain>G9842</strain>
    </source>
</reference>
<proteinExistence type="inferred from homology"/>
<protein>
    <recommendedName>
        <fullName evidence="1">Large ribosomal subunit protein uL16</fullName>
    </recommendedName>
    <alternativeName>
        <fullName evidence="2">50S ribosomal protein L16</fullName>
    </alternativeName>
</protein>
<organism>
    <name type="scientific">Bacillus cereus (strain G9842)</name>
    <dbReference type="NCBI Taxonomy" id="405531"/>
    <lineage>
        <taxon>Bacteria</taxon>
        <taxon>Bacillati</taxon>
        <taxon>Bacillota</taxon>
        <taxon>Bacilli</taxon>
        <taxon>Bacillales</taxon>
        <taxon>Bacillaceae</taxon>
        <taxon>Bacillus</taxon>
        <taxon>Bacillus cereus group</taxon>
    </lineage>
</organism>
<gene>
    <name evidence="1" type="primary">rplP</name>
    <name type="ordered locus">BCG9842_B5188</name>
</gene>
<name>RL16_BACC2</name>
<evidence type="ECO:0000255" key="1">
    <source>
        <dbReference type="HAMAP-Rule" id="MF_01342"/>
    </source>
</evidence>
<evidence type="ECO:0000305" key="2"/>
<accession>B7IT26</accession>